<name>PRPD_ECO57</name>
<dbReference type="EC" id="4.2.1.79" evidence="2"/>
<dbReference type="EC" id="4.2.1.3" evidence="2"/>
<dbReference type="EMBL" id="AE005174">
    <property type="protein sequence ID" value="AAG54682.1"/>
    <property type="molecule type" value="Genomic_DNA"/>
</dbReference>
<dbReference type="EMBL" id="BA000007">
    <property type="protein sequence ID" value="BAB33810.1"/>
    <property type="molecule type" value="Genomic_DNA"/>
</dbReference>
<dbReference type="PIR" id="C90677">
    <property type="entry name" value="C90677"/>
</dbReference>
<dbReference type="PIR" id="F85527">
    <property type="entry name" value="F85527"/>
</dbReference>
<dbReference type="RefSeq" id="NP_308414.1">
    <property type="nucleotide sequence ID" value="NC_002695.1"/>
</dbReference>
<dbReference type="RefSeq" id="WP_001275870.1">
    <property type="nucleotide sequence ID" value="NZ_VOAI01000005.1"/>
</dbReference>
<dbReference type="SMR" id="Q8X693"/>
<dbReference type="STRING" id="155864.Z0429"/>
<dbReference type="GeneID" id="914489"/>
<dbReference type="KEGG" id="ece:Z0429"/>
<dbReference type="KEGG" id="ecs:ECs_0387"/>
<dbReference type="PATRIC" id="fig|386585.9.peg.482"/>
<dbReference type="eggNOG" id="COG2079">
    <property type="taxonomic scope" value="Bacteria"/>
</dbReference>
<dbReference type="HOGENOM" id="CLU_021803_1_0_6"/>
<dbReference type="OMA" id="DHSVMYI"/>
<dbReference type="UniPathway" id="UPA00223">
    <property type="reaction ID" value="UER00718"/>
</dbReference>
<dbReference type="UniPathway" id="UPA00946"/>
<dbReference type="Proteomes" id="UP000000558">
    <property type="component" value="Chromosome"/>
</dbReference>
<dbReference type="Proteomes" id="UP000002519">
    <property type="component" value="Chromosome"/>
</dbReference>
<dbReference type="GO" id="GO:0051537">
    <property type="term" value="F:2 iron, 2 sulfur cluster binding"/>
    <property type="evidence" value="ECO:0000250"/>
    <property type="project" value="UniProtKB"/>
</dbReference>
<dbReference type="GO" id="GO:0047547">
    <property type="term" value="F:2-methylcitrate dehydratase activity"/>
    <property type="evidence" value="ECO:0000250"/>
    <property type="project" value="UniProtKB"/>
</dbReference>
<dbReference type="GO" id="GO:0003994">
    <property type="term" value="F:aconitate hydratase activity"/>
    <property type="evidence" value="ECO:0007669"/>
    <property type="project" value="UniProtKB-EC"/>
</dbReference>
<dbReference type="GO" id="GO:0019679">
    <property type="term" value="P:propionate metabolic process, methylcitrate cycle"/>
    <property type="evidence" value="ECO:0000250"/>
    <property type="project" value="UniProtKB"/>
</dbReference>
<dbReference type="GO" id="GO:0006099">
    <property type="term" value="P:tricarboxylic acid cycle"/>
    <property type="evidence" value="ECO:0007669"/>
    <property type="project" value="UniProtKB-UniPathway"/>
</dbReference>
<dbReference type="FunFam" id="1.10.4100.10:FF:000001">
    <property type="entry name" value="2-methylcitrate dehydratase"/>
    <property type="match status" value="1"/>
</dbReference>
<dbReference type="FunFam" id="3.30.1330.120:FF:000001">
    <property type="entry name" value="2-methylcitrate dehydratase"/>
    <property type="match status" value="1"/>
</dbReference>
<dbReference type="Gene3D" id="1.10.4100.10">
    <property type="entry name" value="2-methylcitrate dehydratase PrpD"/>
    <property type="match status" value="1"/>
</dbReference>
<dbReference type="Gene3D" id="3.30.1330.120">
    <property type="entry name" value="2-methylcitrate dehydratase PrpD"/>
    <property type="match status" value="1"/>
</dbReference>
<dbReference type="InterPro" id="IPR012705">
    <property type="entry name" value="2Me_IsoCit_deHydtase_PrpD"/>
</dbReference>
<dbReference type="InterPro" id="IPR036148">
    <property type="entry name" value="MmgE/PrpD_sf"/>
</dbReference>
<dbReference type="InterPro" id="IPR042183">
    <property type="entry name" value="MmgE/PrpD_sf_1"/>
</dbReference>
<dbReference type="InterPro" id="IPR042188">
    <property type="entry name" value="MmgE/PrpD_sf_2"/>
</dbReference>
<dbReference type="InterPro" id="IPR005656">
    <property type="entry name" value="MmgE_PrpD"/>
</dbReference>
<dbReference type="InterPro" id="IPR045337">
    <property type="entry name" value="MmgE_PrpD_C"/>
</dbReference>
<dbReference type="InterPro" id="IPR045336">
    <property type="entry name" value="MmgE_PrpD_N"/>
</dbReference>
<dbReference type="NCBIfam" id="NF006943">
    <property type="entry name" value="PRK09425.1"/>
    <property type="match status" value="1"/>
</dbReference>
<dbReference type="NCBIfam" id="TIGR02330">
    <property type="entry name" value="prpD"/>
    <property type="match status" value="1"/>
</dbReference>
<dbReference type="PANTHER" id="PTHR16943:SF8">
    <property type="entry name" value="2-METHYLCITRATE DEHYDRATASE"/>
    <property type="match status" value="1"/>
</dbReference>
<dbReference type="PANTHER" id="PTHR16943">
    <property type="entry name" value="2-METHYLCITRATE DEHYDRATASE-RELATED"/>
    <property type="match status" value="1"/>
</dbReference>
<dbReference type="Pfam" id="PF19305">
    <property type="entry name" value="MmgE_PrpD_C"/>
    <property type="match status" value="1"/>
</dbReference>
<dbReference type="Pfam" id="PF03972">
    <property type="entry name" value="MmgE_PrpD_N"/>
    <property type="match status" value="1"/>
</dbReference>
<dbReference type="SUPFAM" id="SSF103378">
    <property type="entry name" value="2-methylcitrate dehydratase PrpD"/>
    <property type="match status" value="1"/>
</dbReference>
<evidence type="ECO:0000250" key="1"/>
<evidence type="ECO:0000250" key="2">
    <source>
        <dbReference type="UniProtKB" id="P77243"/>
    </source>
</evidence>
<evidence type="ECO:0000305" key="3"/>
<sequence>MSAQINNIRPEFDREIVDIVDYVMNYEISSKVAYDTAHYCLLDTLGCGLEALEYPACKKLLGPIVPGTVVPNGVRVPGTQFQLDPVQAAFNIGAMIRWLDFNDTWLAAEWGHPSDNLGGILATADWLSRNAVASGKAPLTMKQVLTGMIKAHEIQGCIALENSFNRVGLDHVLLVKVASTAVVAEMLGLTREEILNAVSLAWVDGQSLRTYRHAPNTGTRKSWAAGDATSRAVRLALMAKTGEMGYPSALTAPVWGFYDVSFKGESFRFQRPYGSYVMENVLFKISFPAEFHSQTAVEAAMTLYEQMQAAGKTAADIEKVSIRTHEACIRIIDKKGPLNNPADRDHCIQYMVAIPLLFGRLTAADYEDNVAQDKRIDALREKINCFEDPVFTADYHDPEKRAIANAITLEFTDGTRFEEVVVEYPIGHARRRQDGIPKLVDKFKINLARQFPTRQQQRILEVSLDRARLEQMPVNEYLDLYVI</sequence>
<accession>Q8X693</accession>
<protein>
    <recommendedName>
        <fullName evidence="2">2-methylcitrate dehydratase</fullName>
        <shortName evidence="2">2-MC dehydratase</shortName>
        <ecNumber evidence="2">4.2.1.79</ecNumber>
    </recommendedName>
    <alternativeName>
        <fullName evidence="2">Probable aconitate hydratase</fullName>
        <shortName evidence="2">ACN</shortName>
        <shortName evidence="2">Aconitase</shortName>
        <ecNumber evidence="2">4.2.1.3</ecNumber>
    </alternativeName>
</protein>
<keyword id="KW-0456">Lyase</keyword>
<keyword id="KW-1185">Reference proteome</keyword>
<keyword id="KW-0816">Tricarboxylic acid cycle</keyword>
<proteinExistence type="inferred from homology"/>
<reference key="1">
    <citation type="journal article" date="2001" name="Nature">
        <title>Genome sequence of enterohaemorrhagic Escherichia coli O157:H7.</title>
        <authorList>
            <person name="Perna N.T."/>
            <person name="Plunkett G. III"/>
            <person name="Burland V."/>
            <person name="Mau B."/>
            <person name="Glasner J.D."/>
            <person name="Rose D.J."/>
            <person name="Mayhew G.F."/>
            <person name="Evans P.S."/>
            <person name="Gregor J."/>
            <person name="Kirkpatrick H.A."/>
            <person name="Posfai G."/>
            <person name="Hackett J."/>
            <person name="Klink S."/>
            <person name="Boutin A."/>
            <person name="Shao Y."/>
            <person name="Miller L."/>
            <person name="Grotbeck E.J."/>
            <person name="Davis N.W."/>
            <person name="Lim A."/>
            <person name="Dimalanta E.T."/>
            <person name="Potamousis K."/>
            <person name="Apodaca J."/>
            <person name="Anantharaman T.S."/>
            <person name="Lin J."/>
            <person name="Yen G."/>
            <person name="Schwartz D.C."/>
            <person name="Welch R.A."/>
            <person name="Blattner F.R."/>
        </authorList>
    </citation>
    <scope>NUCLEOTIDE SEQUENCE [LARGE SCALE GENOMIC DNA]</scope>
    <source>
        <strain>O157:H7 / EDL933 / ATCC 700927 / EHEC</strain>
    </source>
</reference>
<reference key="2">
    <citation type="journal article" date="2001" name="DNA Res.">
        <title>Complete genome sequence of enterohemorrhagic Escherichia coli O157:H7 and genomic comparison with a laboratory strain K-12.</title>
        <authorList>
            <person name="Hayashi T."/>
            <person name="Makino K."/>
            <person name="Ohnishi M."/>
            <person name="Kurokawa K."/>
            <person name="Ishii K."/>
            <person name="Yokoyama K."/>
            <person name="Han C.-G."/>
            <person name="Ohtsubo E."/>
            <person name="Nakayama K."/>
            <person name="Murata T."/>
            <person name="Tanaka M."/>
            <person name="Tobe T."/>
            <person name="Iida T."/>
            <person name="Takami H."/>
            <person name="Honda T."/>
            <person name="Sasakawa C."/>
            <person name="Ogasawara N."/>
            <person name="Yasunaga T."/>
            <person name="Kuhara S."/>
            <person name="Shiba T."/>
            <person name="Hattori M."/>
            <person name="Shinagawa H."/>
        </authorList>
    </citation>
    <scope>NUCLEOTIDE SEQUENCE [LARGE SCALE GENOMIC DNA]</scope>
    <source>
        <strain>O157:H7 / Sakai / RIMD 0509952 / EHEC</strain>
    </source>
</reference>
<gene>
    <name type="primary">prpD</name>
    <name type="ordered locus">Z0429</name>
    <name type="ordered locus">ECs0387</name>
</gene>
<organism>
    <name type="scientific">Escherichia coli O157:H7</name>
    <dbReference type="NCBI Taxonomy" id="83334"/>
    <lineage>
        <taxon>Bacteria</taxon>
        <taxon>Pseudomonadati</taxon>
        <taxon>Pseudomonadota</taxon>
        <taxon>Gammaproteobacteria</taxon>
        <taxon>Enterobacterales</taxon>
        <taxon>Enterobacteriaceae</taxon>
        <taxon>Escherichia</taxon>
    </lineage>
</organism>
<comment type="function">
    <text evidence="2">Involved in the catabolism of short chain fatty acids (SCFA) via the tricarboxylic acid (TCA)(acetyl degradation route) and via the 2-methylcitrate cycle I (propionate degradation route). Catalyzes the dehydration of 2-methylcitrate (2-MC) to yield the cis isomer of 2-methyl-aconitate. Could also catalyze the dehydration of citrate and the hydration of cis-aconitate.</text>
</comment>
<comment type="catalytic activity">
    <reaction evidence="2">
        <text>(2S,3S)-2-methylcitrate = 2-methyl-cis-aconitate + H2O</text>
        <dbReference type="Rhea" id="RHEA:17725"/>
        <dbReference type="ChEBI" id="CHEBI:15377"/>
        <dbReference type="ChEBI" id="CHEBI:57872"/>
        <dbReference type="ChEBI" id="CHEBI:58853"/>
        <dbReference type="EC" id="4.2.1.79"/>
    </reaction>
</comment>
<comment type="catalytic activity">
    <reaction evidence="2">
        <text>citrate = D-threo-isocitrate</text>
        <dbReference type="Rhea" id="RHEA:10336"/>
        <dbReference type="ChEBI" id="CHEBI:15562"/>
        <dbReference type="ChEBI" id="CHEBI:16947"/>
        <dbReference type="EC" id="4.2.1.3"/>
    </reaction>
</comment>
<comment type="pathway">
    <text evidence="2">Organic acid metabolism; propanoate degradation.</text>
</comment>
<comment type="pathway">
    <text evidence="2">Carbohydrate metabolism; tricarboxylic acid cycle; isocitrate from oxaloacetate: step 2/2.</text>
</comment>
<comment type="subunit">
    <text evidence="2">Monomer.</text>
</comment>
<comment type="similarity">
    <text evidence="3">Belongs to the PrpD family.</text>
</comment>
<feature type="initiator methionine" description="Removed" evidence="1">
    <location>
        <position position="1"/>
    </location>
</feature>
<feature type="chain" id="PRO_0000215024" description="2-methylcitrate dehydratase">
    <location>
        <begin position="2"/>
        <end position="483"/>
    </location>
</feature>